<dbReference type="EMBL" id="D16143">
    <property type="protein sequence ID" value="BAA03714.1"/>
    <property type="molecule type" value="mRNA"/>
</dbReference>
<dbReference type="RefSeq" id="NP_001009355.1">
    <property type="nucleotide sequence ID" value="NM_001009355.1"/>
</dbReference>
<dbReference type="SMR" id="P41690"/>
<dbReference type="FunCoup" id="P41690">
    <property type="interactions" value="5"/>
</dbReference>
<dbReference type="STRING" id="9685.ENSFCAP00000005380"/>
<dbReference type="GlyCosmos" id="P41690">
    <property type="glycosylation" value="2 sites, No reported glycans"/>
</dbReference>
<dbReference type="PaxDb" id="9685-ENSFCAP00000005380"/>
<dbReference type="Ensembl" id="ENSFCAT00000005796.5">
    <property type="protein sequence ID" value="ENSFCAP00000005380.4"/>
    <property type="gene ID" value="ENSFCAG00000005794.6"/>
</dbReference>
<dbReference type="GeneID" id="493953"/>
<dbReference type="KEGG" id="fca:493953"/>
<dbReference type="CTD" id="3559"/>
<dbReference type="VGNC" id="VGNC:67776">
    <property type="gene designation" value="IL2RA"/>
</dbReference>
<dbReference type="eggNOG" id="ENOG502SUAG">
    <property type="taxonomic scope" value="Eukaryota"/>
</dbReference>
<dbReference type="GeneTree" id="ENSGT00390000018872"/>
<dbReference type="HOGENOM" id="CLU_089677_1_0_1"/>
<dbReference type="InParanoid" id="P41690"/>
<dbReference type="OMA" id="TILNCEC"/>
<dbReference type="OrthoDB" id="9833060at2759"/>
<dbReference type="TreeFam" id="TF337408"/>
<dbReference type="Proteomes" id="UP000011712">
    <property type="component" value="Chromosome B4"/>
</dbReference>
<dbReference type="Bgee" id="ENSFCAG00000005794">
    <property type="expression patterns" value="Expressed in spleen and 4 other cell types or tissues"/>
</dbReference>
<dbReference type="GO" id="GO:0016020">
    <property type="term" value="C:membrane"/>
    <property type="evidence" value="ECO:0007669"/>
    <property type="project" value="UniProtKB-SubCell"/>
</dbReference>
<dbReference type="GO" id="GO:0019976">
    <property type="term" value="F:interleukin-2 binding"/>
    <property type="evidence" value="ECO:0000318"/>
    <property type="project" value="GO_Central"/>
</dbReference>
<dbReference type="GO" id="GO:0004911">
    <property type="term" value="F:interleukin-2 receptor activity"/>
    <property type="evidence" value="ECO:0007669"/>
    <property type="project" value="InterPro"/>
</dbReference>
<dbReference type="GO" id="GO:0002376">
    <property type="term" value="P:immune system process"/>
    <property type="evidence" value="ECO:0007669"/>
    <property type="project" value="UniProtKB-KW"/>
</dbReference>
<dbReference type="GO" id="GO:0006954">
    <property type="term" value="P:inflammatory response"/>
    <property type="evidence" value="ECO:0000318"/>
    <property type="project" value="GO_Central"/>
</dbReference>
<dbReference type="CDD" id="cd00033">
    <property type="entry name" value="CCP"/>
    <property type="match status" value="1"/>
</dbReference>
<dbReference type="FunFam" id="2.20.28.230:FF:000002">
    <property type="entry name" value="Interleukin-2 receptor subunit alpha"/>
    <property type="match status" value="1"/>
</dbReference>
<dbReference type="FunFam" id="2.20.28.230:FF:000004">
    <property type="entry name" value="Interleukin-2 receptor subunit alpha"/>
    <property type="match status" value="1"/>
</dbReference>
<dbReference type="Gene3D" id="2.20.28.230">
    <property type="match status" value="3"/>
</dbReference>
<dbReference type="InterPro" id="IPR015486">
    <property type="entry name" value="IL-2_rcpt_alpha"/>
</dbReference>
<dbReference type="InterPro" id="IPR035976">
    <property type="entry name" value="Sushi/SCR/CCP_sf"/>
</dbReference>
<dbReference type="InterPro" id="IPR000436">
    <property type="entry name" value="Sushi_SCR_CCP_dom"/>
</dbReference>
<dbReference type="PANTHER" id="PTHR10573">
    <property type="entry name" value="INTERLEUKIN-2 RECEPTOR ALPHA CHAIN"/>
    <property type="match status" value="1"/>
</dbReference>
<dbReference type="PANTHER" id="PTHR10573:SF0">
    <property type="entry name" value="INTERLEUKIN-2 RECEPTOR SUBUNIT ALPHA"/>
    <property type="match status" value="1"/>
</dbReference>
<dbReference type="Pfam" id="PF00084">
    <property type="entry name" value="Sushi"/>
    <property type="match status" value="2"/>
</dbReference>
<dbReference type="SMART" id="SM00032">
    <property type="entry name" value="CCP"/>
    <property type="match status" value="2"/>
</dbReference>
<dbReference type="SUPFAM" id="SSF57535">
    <property type="entry name" value="Complement control module/SCR domain"/>
    <property type="match status" value="2"/>
</dbReference>
<dbReference type="PROSITE" id="PS50923">
    <property type="entry name" value="SUSHI"/>
    <property type="match status" value="2"/>
</dbReference>
<feature type="signal peptide" evidence="1">
    <location>
        <begin position="1"/>
        <end position="21"/>
    </location>
</feature>
<feature type="chain" id="PRO_0000011023" description="Interleukin-2 receptor subunit alpha">
    <location>
        <begin position="22"/>
        <end position="275"/>
    </location>
</feature>
<feature type="topological domain" description="Extracellular" evidence="3">
    <location>
        <begin position="22"/>
        <end position="243"/>
    </location>
</feature>
<feature type="transmembrane region" description="Helical" evidence="3">
    <location>
        <begin position="244"/>
        <end position="262"/>
    </location>
</feature>
<feature type="topological domain" description="Cytoplasmic" evidence="3">
    <location>
        <begin position="263"/>
        <end position="275"/>
    </location>
</feature>
<feature type="domain" description="Sushi 1" evidence="4">
    <location>
        <begin position="22"/>
        <end position="84"/>
    </location>
</feature>
<feature type="domain" description="Sushi 2" evidence="4">
    <location>
        <begin position="123"/>
        <end position="186"/>
    </location>
</feature>
<feature type="region of interest" description="Disordered" evidence="5">
    <location>
        <begin position="91"/>
        <end position="118"/>
    </location>
</feature>
<feature type="region of interest" description="Disordered" evidence="5">
    <location>
        <begin position="188"/>
        <end position="213"/>
    </location>
</feature>
<feature type="compositionally biased region" description="Polar residues" evidence="5">
    <location>
        <begin position="108"/>
        <end position="118"/>
    </location>
</feature>
<feature type="glycosylation site" description="N-linked (GlcNAc...) asparagine" evidence="3">
    <location>
        <position position="60"/>
    </location>
</feature>
<feature type="glycosylation site" description="N-linked (GlcNAc...) asparagine" evidence="3">
    <location>
        <position position="70"/>
    </location>
</feature>
<feature type="disulfide bond" evidence="4">
    <location>
        <begin position="24"/>
        <end position="67"/>
    </location>
</feature>
<feature type="disulfide bond" evidence="4">
    <location>
        <begin position="49"/>
        <end position="80"/>
    </location>
</feature>
<feature type="disulfide bond" evidence="4">
    <location>
        <begin position="51"/>
        <end position="82"/>
    </location>
</feature>
<feature type="disulfide bond" evidence="4">
    <location>
        <begin position="125"/>
        <end position="168"/>
    </location>
</feature>
<feature type="disulfide bond" evidence="4">
    <location>
        <begin position="152"/>
        <end position="184"/>
    </location>
</feature>
<proteinExistence type="evidence at transcript level"/>
<name>IL2RA_FELCA</name>
<sequence length="275" mass="30817">MEPSLLLWGILTFVVVHGHVTELCDENPPDIQHATFKALTYKTGTMLNCECKKGFRRISNGSAFMLCAGNSSHSSWENQCRCISTSPRATDGQIIPKPEEQKGKSPMGMQSQMQPTDQVNLPGHCREPPPWEHEDSRRIYHFVVGQTVHYQCMQGFRALKRGPAKSVCKTTCGKATWTQPRLQCLSERSDGWFPDDEEPQASTDAALGSDTSCPSITASTTDFQRHTEVAMTTESFVFTTEYQIAVAGCVLLLISIVLLSGLTWQRRWRKSRRTI</sequence>
<comment type="function">
    <text evidence="2">Receptor for interleukin-2. The receptor is involved in the regulation of immune tolerance by controlling regulatory T cells (TREGs) activity. TREGs suppress the activation and expansion of autoreactive T-cells.</text>
</comment>
<comment type="subunit">
    <text evidence="1">Non-covalent dimer of an alpha and a beta subunit. IL2R exists in 3 different forms: a high affinity dimer, an intermediate affinity monomer (beta subunit), and a low affinity monomer (alpha subunit). The high and intermediate affinity forms also associate with a gamma subunit (By similarity).</text>
</comment>
<comment type="subcellular location">
    <subcellularLocation>
        <location>Membrane</location>
        <topology>Single-pass type I membrane protein</topology>
    </subcellularLocation>
</comment>
<protein>
    <recommendedName>
        <fullName>Interleukin-2 receptor subunit alpha</fullName>
        <shortName>IL-2 receptor subunit alpha</shortName>
        <shortName>IL-2-RA</shortName>
        <shortName>IL-2R subunit alpha</shortName>
        <shortName>IL2-RA</shortName>
    </recommendedName>
    <cdAntigenName>CD25</cdAntigenName>
</protein>
<keyword id="KW-1015">Disulfide bond</keyword>
<keyword id="KW-0325">Glycoprotein</keyword>
<keyword id="KW-0391">Immunity</keyword>
<keyword id="KW-0472">Membrane</keyword>
<keyword id="KW-0675">Receptor</keyword>
<keyword id="KW-1185">Reference proteome</keyword>
<keyword id="KW-0677">Repeat</keyword>
<keyword id="KW-0732">Signal</keyword>
<keyword id="KW-0768">Sushi</keyword>
<keyword id="KW-0812">Transmembrane</keyword>
<keyword id="KW-1133">Transmembrane helix</keyword>
<evidence type="ECO:0000250" key="1"/>
<evidence type="ECO:0000250" key="2">
    <source>
        <dbReference type="UniProtKB" id="P01589"/>
    </source>
</evidence>
<evidence type="ECO:0000255" key="3"/>
<evidence type="ECO:0000255" key="4">
    <source>
        <dbReference type="PROSITE-ProRule" id="PRU00302"/>
    </source>
</evidence>
<evidence type="ECO:0000256" key="5">
    <source>
        <dbReference type="SAM" id="MobiDB-lite"/>
    </source>
</evidence>
<organism>
    <name type="scientific">Felis catus</name>
    <name type="common">Cat</name>
    <name type="synonym">Felis silvestris catus</name>
    <dbReference type="NCBI Taxonomy" id="9685"/>
    <lineage>
        <taxon>Eukaryota</taxon>
        <taxon>Metazoa</taxon>
        <taxon>Chordata</taxon>
        <taxon>Craniata</taxon>
        <taxon>Vertebrata</taxon>
        <taxon>Euteleostomi</taxon>
        <taxon>Mammalia</taxon>
        <taxon>Eutheria</taxon>
        <taxon>Laurasiatheria</taxon>
        <taxon>Carnivora</taxon>
        <taxon>Feliformia</taxon>
        <taxon>Felidae</taxon>
        <taxon>Felinae</taxon>
        <taxon>Felis</taxon>
    </lineage>
</organism>
<gene>
    <name type="primary">IL2RA</name>
</gene>
<reference key="1">
    <citation type="submission" date="1993-04" db="EMBL/GenBank/DDBJ databases">
        <title>Molecular cloning of the feline interleukin 2 receptor alpha chain cDNA.</title>
        <authorList>
            <person name="Matsumoto Y."/>
            <person name="Ohno K."/>
            <person name="Goitsuka R."/>
            <person name="Hirota Y."/>
            <person name="Tsujimoto H."/>
            <person name="Hasegawa A."/>
        </authorList>
    </citation>
    <scope>NUCLEOTIDE SEQUENCE [MRNA]</scope>
</reference>
<accession>P41690</accession>